<proteinExistence type="inferred from homology"/>
<sequence>MSDTAERVKKIVVEHLGVDADKVTEGASFIDDLGADSLDTVELVMAFEEEFGVEIPDDAAETILTVGDAVKFIDKASA</sequence>
<feature type="chain" id="PRO_0000180116" description="Acyl carrier protein AcpP">
    <location>
        <begin position="1"/>
        <end position="78"/>
    </location>
</feature>
<feature type="domain" description="Carrier" evidence="2">
    <location>
        <begin position="2"/>
        <end position="77"/>
    </location>
</feature>
<feature type="modified residue" description="O-(pantetheine 4'-phosphoryl)serine" evidence="2">
    <location>
        <position position="37"/>
    </location>
</feature>
<organism>
    <name type="scientific">Brucella suis biovar 1 (strain 1330)</name>
    <dbReference type="NCBI Taxonomy" id="204722"/>
    <lineage>
        <taxon>Bacteria</taxon>
        <taxon>Pseudomonadati</taxon>
        <taxon>Pseudomonadota</taxon>
        <taxon>Alphaproteobacteria</taxon>
        <taxon>Hyphomicrobiales</taxon>
        <taxon>Brucellaceae</taxon>
        <taxon>Brucella/Ochrobactrum group</taxon>
        <taxon>Brucella</taxon>
    </lineage>
</organism>
<protein>
    <recommendedName>
        <fullName evidence="1">Acyl carrier protein AcpP</fullName>
        <shortName evidence="1">ACP</shortName>
    </recommendedName>
</protein>
<gene>
    <name evidence="1" type="primary">acpP</name>
    <name type="ordered locus">BR0459</name>
    <name type="ordered locus">BS1330_I0460</name>
</gene>
<evidence type="ECO:0000255" key="1">
    <source>
        <dbReference type="HAMAP-Rule" id="MF_01217"/>
    </source>
</evidence>
<evidence type="ECO:0000255" key="2">
    <source>
        <dbReference type="PROSITE-ProRule" id="PRU00258"/>
    </source>
</evidence>
<name>ACP_BRUSU</name>
<accession>P63438</accession>
<accession>G0K708</accession>
<accession>Q8YFP5</accession>
<keyword id="KW-0963">Cytoplasm</keyword>
<keyword id="KW-0275">Fatty acid biosynthesis</keyword>
<keyword id="KW-0276">Fatty acid metabolism</keyword>
<keyword id="KW-0444">Lipid biosynthesis</keyword>
<keyword id="KW-0443">Lipid metabolism</keyword>
<keyword id="KW-0596">Phosphopantetheine</keyword>
<keyword id="KW-0597">Phosphoprotein</keyword>
<dbReference type="EMBL" id="AE014291">
    <property type="protein sequence ID" value="AAN29402.1"/>
    <property type="molecule type" value="Genomic_DNA"/>
</dbReference>
<dbReference type="EMBL" id="CP002997">
    <property type="protein sequence ID" value="AEM17815.1"/>
    <property type="molecule type" value="Genomic_DNA"/>
</dbReference>
<dbReference type="RefSeq" id="WP_002963616.1">
    <property type="nucleotide sequence ID" value="NZ_KN046804.1"/>
</dbReference>
<dbReference type="SMR" id="P63438"/>
<dbReference type="KEGG" id="bms:BR0459"/>
<dbReference type="KEGG" id="bsi:BS1330_I0460"/>
<dbReference type="PATRIC" id="fig|204722.22.peg.1384"/>
<dbReference type="HOGENOM" id="CLU_108696_5_1_5"/>
<dbReference type="UniPathway" id="UPA00094"/>
<dbReference type="Proteomes" id="UP000007104">
    <property type="component" value="Chromosome I"/>
</dbReference>
<dbReference type="GO" id="GO:0005829">
    <property type="term" value="C:cytosol"/>
    <property type="evidence" value="ECO:0007669"/>
    <property type="project" value="TreeGrafter"/>
</dbReference>
<dbReference type="GO" id="GO:0016020">
    <property type="term" value="C:membrane"/>
    <property type="evidence" value="ECO:0007669"/>
    <property type="project" value="GOC"/>
</dbReference>
<dbReference type="GO" id="GO:0000035">
    <property type="term" value="F:acyl binding"/>
    <property type="evidence" value="ECO:0007669"/>
    <property type="project" value="TreeGrafter"/>
</dbReference>
<dbReference type="GO" id="GO:0000036">
    <property type="term" value="F:acyl carrier activity"/>
    <property type="evidence" value="ECO:0007669"/>
    <property type="project" value="UniProtKB-UniRule"/>
</dbReference>
<dbReference type="GO" id="GO:0031177">
    <property type="term" value="F:phosphopantetheine binding"/>
    <property type="evidence" value="ECO:0007669"/>
    <property type="project" value="InterPro"/>
</dbReference>
<dbReference type="GO" id="GO:0009245">
    <property type="term" value="P:lipid A biosynthetic process"/>
    <property type="evidence" value="ECO:0007669"/>
    <property type="project" value="TreeGrafter"/>
</dbReference>
<dbReference type="FunFam" id="1.10.1200.10:FF:000001">
    <property type="entry name" value="Acyl carrier protein"/>
    <property type="match status" value="1"/>
</dbReference>
<dbReference type="Gene3D" id="1.10.1200.10">
    <property type="entry name" value="ACP-like"/>
    <property type="match status" value="1"/>
</dbReference>
<dbReference type="HAMAP" id="MF_01217">
    <property type="entry name" value="Acyl_carrier"/>
    <property type="match status" value="1"/>
</dbReference>
<dbReference type="InterPro" id="IPR003231">
    <property type="entry name" value="ACP"/>
</dbReference>
<dbReference type="InterPro" id="IPR036736">
    <property type="entry name" value="ACP-like_sf"/>
</dbReference>
<dbReference type="InterPro" id="IPR020806">
    <property type="entry name" value="PKS_PP-bd"/>
</dbReference>
<dbReference type="InterPro" id="IPR009081">
    <property type="entry name" value="PP-bd_ACP"/>
</dbReference>
<dbReference type="InterPro" id="IPR006162">
    <property type="entry name" value="Ppantetheine_attach_site"/>
</dbReference>
<dbReference type="NCBIfam" id="TIGR00517">
    <property type="entry name" value="acyl_carrier"/>
    <property type="match status" value="1"/>
</dbReference>
<dbReference type="NCBIfam" id="NF002148">
    <property type="entry name" value="PRK00982.1-2"/>
    <property type="match status" value="1"/>
</dbReference>
<dbReference type="NCBIfam" id="NF002149">
    <property type="entry name" value="PRK00982.1-3"/>
    <property type="match status" value="1"/>
</dbReference>
<dbReference type="NCBIfam" id="NF002150">
    <property type="entry name" value="PRK00982.1-4"/>
    <property type="match status" value="1"/>
</dbReference>
<dbReference type="NCBIfam" id="NF002151">
    <property type="entry name" value="PRK00982.1-5"/>
    <property type="match status" value="1"/>
</dbReference>
<dbReference type="PANTHER" id="PTHR20863">
    <property type="entry name" value="ACYL CARRIER PROTEIN"/>
    <property type="match status" value="1"/>
</dbReference>
<dbReference type="PANTHER" id="PTHR20863:SF76">
    <property type="entry name" value="CARRIER DOMAIN-CONTAINING PROTEIN"/>
    <property type="match status" value="1"/>
</dbReference>
<dbReference type="Pfam" id="PF00550">
    <property type="entry name" value="PP-binding"/>
    <property type="match status" value="1"/>
</dbReference>
<dbReference type="SMART" id="SM00823">
    <property type="entry name" value="PKS_PP"/>
    <property type="match status" value="1"/>
</dbReference>
<dbReference type="SUPFAM" id="SSF47336">
    <property type="entry name" value="ACP-like"/>
    <property type="match status" value="1"/>
</dbReference>
<dbReference type="PROSITE" id="PS50075">
    <property type="entry name" value="CARRIER"/>
    <property type="match status" value="1"/>
</dbReference>
<dbReference type="PROSITE" id="PS00012">
    <property type="entry name" value="PHOSPHOPANTETHEINE"/>
    <property type="match status" value="1"/>
</dbReference>
<reference key="1">
    <citation type="journal article" date="2002" name="Proc. Natl. Acad. Sci. U.S.A.">
        <title>The Brucella suis genome reveals fundamental similarities between animal and plant pathogens and symbionts.</title>
        <authorList>
            <person name="Paulsen I.T."/>
            <person name="Seshadri R."/>
            <person name="Nelson K.E."/>
            <person name="Eisen J.A."/>
            <person name="Heidelberg J.F."/>
            <person name="Read T.D."/>
            <person name="Dodson R.J."/>
            <person name="Umayam L.A."/>
            <person name="Brinkac L.M."/>
            <person name="Beanan M.J."/>
            <person name="Daugherty S.C."/>
            <person name="DeBoy R.T."/>
            <person name="Durkin A.S."/>
            <person name="Kolonay J.F."/>
            <person name="Madupu R."/>
            <person name="Nelson W.C."/>
            <person name="Ayodeji B."/>
            <person name="Kraul M."/>
            <person name="Shetty J."/>
            <person name="Malek J.A."/>
            <person name="Van Aken S.E."/>
            <person name="Riedmuller S."/>
            <person name="Tettelin H."/>
            <person name="Gill S.R."/>
            <person name="White O."/>
            <person name="Salzberg S.L."/>
            <person name="Hoover D.L."/>
            <person name="Lindler L.E."/>
            <person name="Halling S.M."/>
            <person name="Boyle S.M."/>
            <person name="Fraser C.M."/>
        </authorList>
    </citation>
    <scope>NUCLEOTIDE SEQUENCE [LARGE SCALE GENOMIC DNA]</scope>
    <source>
        <strain>1330</strain>
    </source>
</reference>
<reference key="2">
    <citation type="journal article" date="2011" name="J. Bacteriol.">
        <title>Revised genome sequence of Brucella suis 1330.</title>
        <authorList>
            <person name="Tae H."/>
            <person name="Shallom S."/>
            <person name="Settlage R."/>
            <person name="Preston D."/>
            <person name="Adams L.G."/>
            <person name="Garner H.R."/>
        </authorList>
    </citation>
    <scope>NUCLEOTIDE SEQUENCE [LARGE SCALE GENOMIC DNA]</scope>
    <source>
        <strain>1330</strain>
    </source>
</reference>
<comment type="function">
    <text evidence="1">Carrier of the growing fatty acid chain in fatty acid biosynthesis.</text>
</comment>
<comment type="pathway">
    <text evidence="1">Lipid metabolism; fatty acid biosynthesis.</text>
</comment>
<comment type="subcellular location">
    <subcellularLocation>
        <location evidence="1">Cytoplasm</location>
    </subcellularLocation>
</comment>
<comment type="PTM">
    <text evidence="1">4'-phosphopantetheine is transferred from CoA to a specific serine of apo-ACP by AcpS. This modification is essential for activity because fatty acids are bound in thioester linkage to the sulfhydryl of the prosthetic group.</text>
</comment>
<comment type="similarity">
    <text evidence="1">Belongs to the acyl carrier protein (ACP) family.</text>
</comment>